<sequence>MTTTTTTRLLLAAILLAVAAADDDGQTLLEIKKSFRNVDNVLYDWAGDGAPRRYCSWRGVLCDNVTFAVAALNLSGLNLGGEISPAIGNLKSVESIDLKSNELSGQIPDEIGDCTSLKTLDLSSNNLGGDIPFSISKLKHLENLILKNNQLVGMIPSTLSQLPNLKILDLAQNKLNGEIPRLIYWNEVLQYLGLRSNNLEGSLSPEMCQLTGLWYFDVKNNSLTGIIPDTIGNCTSFQVLDLSYNRLTGEIPFNIGFLQVATLSLQGNNFSGPIPSVIGLMQALAVLDLSFNQLSGPIPSILGNLTYTEKLYLQGNRLTGSIPPELGNMSTLHYLELNDNQLTGFIPPELGKLTGLFDLNLANNNLEGPIPDNISSCMNLISFNAYGNKLNGTVPRSLHKLESITYLNLSSNYLSGAIPIELAKMKNLDTLDLSCNMVAGPIPSAIGSLEHLLRLNFSNNNLVGYIPAEFGNLRSIMEIDLSSNHLGGLIPQEVGMLQNLILLKLESNNITGDVSSLINCFSLNVLNVSYNNLAGIVPTDNNFSRFSPDSFLGNPGLCGYWLGSSCYSTSHVQRSSVSRSAILGIAVAGLVILLMILAAACWPHWAQVPKDVSLCKPDIHALPSSNVPPKLVILHMNMAFLVYEDIMRMTENLSEKYIIGYGASSTVYKCVLKNCKPVAIKKLYAHYPQSLKEFETELETVGSIKHRNLVSLQGYSLSPAGNLLFYDYLENGSLWDVLHAGSSKKQKLDWEARLRIALGAAQGLAYLHHDCNPRIIHRDVKSKNILLDKDYEAHLADFGIAKSLCTSKTHTSTYVMGTIGYIDPEYACTSRLNEKSDVYSYGIVLLELLTGKKPVDNECNLHHLILSKAADNTVMEMVDPDIADTCKDLGEVKKVFQLALLCSKRQPSDRPTMHEVVRVLDCLVYPDPPSKPALPPALPQSSTVPSYVNEYVSLRGGSTLSCENSSSASDAELFLKFGEVISQNTE</sequence>
<proteinExistence type="evidence at protein level"/>
<protein>
    <recommendedName>
        <fullName evidence="7">LRR receptor-like serine/threonine-protein kinase ER2</fullName>
        <ecNumber evidence="8">2.7.11.1</ecNumber>
    </recommendedName>
    <alternativeName>
        <fullName evidence="6">ERECTA homolog 2</fullName>
        <shortName evidence="6">ER homolog 2</shortName>
        <shortName evidence="6">OsER2</shortName>
    </alternativeName>
    <alternativeName>
        <fullName evidence="5">Receptor-like cytoplasmic kinase 85</fullName>
        <shortName evidence="5">OsRLCK85</shortName>
    </alternativeName>
</protein>
<evidence type="ECO:0000255" key="1"/>
<evidence type="ECO:0000255" key="2">
    <source>
        <dbReference type="PROSITE-ProRule" id="PRU00159"/>
    </source>
</evidence>
<evidence type="ECO:0000255" key="3">
    <source>
        <dbReference type="PROSITE-ProRule" id="PRU00498"/>
    </source>
</evidence>
<evidence type="ECO:0000269" key="4">
    <source>
    </source>
</evidence>
<evidence type="ECO:0000303" key="5">
    <source>
    </source>
</evidence>
<evidence type="ECO:0000303" key="6">
    <source>
    </source>
</evidence>
<evidence type="ECO:0000305" key="7"/>
<evidence type="ECO:0000305" key="8">
    <source>
    </source>
</evidence>
<evidence type="ECO:0000312" key="9">
    <source>
        <dbReference type="EMBL" id="BAD16970.1"/>
    </source>
</evidence>
<evidence type="ECO:0000312" key="10">
    <source>
        <dbReference type="PROSITE" id="PS51450"/>
    </source>
</evidence>
<dbReference type="EC" id="2.7.11.1" evidence="8"/>
<dbReference type="EMBL" id="JN991005">
    <property type="protein sequence ID" value="AFJ14786.1"/>
    <property type="molecule type" value="mRNA"/>
</dbReference>
<dbReference type="EMBL" id="AP004140">
    <property type="protein sequence ID" value="BAD16970.1"/>
    <property type="status" value="ALT_SEQ"/>
    <property type="molecule type" value="Genomic_DNA"/>
</dbReference>
<dbReference type="EMBL" id="AP008208">
    <property type="protein sequence ID" value="BAF10204.1"/>
    <property type="status" value="ALT_SEQ"/>
    <property type="molecule type" value="Genomic_DNA"/>
</dbReference>
<dbReference type="EMBL" id="AP014958">
    <property type="protein sequence ID" value="BAS81182.1"/>
    <property type="status" value="ALT_SEQ"/>
    <property type="molecule type" value="Genomic_DNA"/>
</dbReference>
<dbReference type="EMBL" id="AK060260">
    <property type="protein sequence ID" value="BAG87384.1"/>
    <property type="status" value="ALT_INIT"/>
    <property type="molecule type" value="mRNA"/>
</dbReference>
<dbReference type="RefSeq" id="XP_015623966.1">
    <property type="nucleotide sequence ID" value="XM_015768480.1"/>
</dbReference>
<dbReference type="SMR" id="I1Z695"/>
<dbReference type="FunCoup" id="I1Z695">
    <property type="interactions" value="206"/>
</dbReference>
<dbReference type="STRING" id="39947.I1Z695"/>
<dbReference type="GlyCosmos" id="I1Z695">
    <property type="glycosylation" value="14 sites, No reported glycans"/>
</dbReference>
<dbReference type="PaxDb" id="39947-I1Z695"/>
<dbReference type="EnsemblPlants" id="Os02t0777400-01">
    <property type="protein sequence ID" value="Os02t0777400-01"/>
    <property type="gene ID" value="Os02g0777400"/>
</dbReference>
<dbReference type="Gramene" id="Os02t0777400-01">
    <property type="protein sequence ID" value="Os02t0777400-01"/>
    <property type="gene ID" value="Os02g0777400"/>
</dbReference>
<dbReference type="KEGG" id="dosa:Os02g0777400"/>
<dbReference type="eggNOG" id="ENOG502QTEP">
    <property type="taxonomic scope" value="Eukaryota"/>
</dbReference>
<dbReference type="HOGENOM" id="CLU_000288_92_6_1"/>
<dbReference type="InParanoid" id="I1Z695"/>
<dbReference type="OrthoDB" id="676979at2759"/>
<dbReference type="Proteomes" id="UP000000763">
    <property type="component" value="Chromosome 2"/>
</dbReference>
<dbReference type="Proteomes" id="UP000059680">
    <property type="component" value="Chromosome 2"/>
</dbReference>
<dbReference type="GO" id="GO:0016020">
    <property type="term" value="C:membrane"/>
    <property type="evidence" value="ECO:0000318"/>
    <property type="project" value="GO_Central"/>
</dbReference>
<dbReference type="GO" id="GO:0005886">
    <property type="term" value="C:plasma membrane"/>
    <property type="evidence" value="ECO:0007669"/>
    <property type="project" value="UniProtKB-SubCell"/>
</dbReference>
<dbReference type="GO" id="GO:0005524">
    <property type="term" value="F:ATP binding"/>
    <property type="evidence" value="ECO:0007669"/>
    <property type="project" value="UniProtKB-KW"/>
</dbReference>
<dbReference type="GO" id="GO:0106310">
    <property type="term" value="F:protein serine kinase activity"/>
    <property type="evidence" value="ECO:0007669"/>
    <property type="project" value="RHEA"/>
</dbReference>
<dbReference type="GO" id="GO:0004674">
    <property type="term" value="F:protein serine/threonine kinase activity"/>
    <property type="evidence" value="ECO:0007669"/>
    <property type="project" value="UniProtKB-KW"/>
</dbReference>
<dbReference type="GO" id="GO:0033612">
    <property type="term" value="F:receptor serine/threonine kinase binding"/>
    <property type="evidence" value="ECO:0000318"/>
    <property type="project" value="GO_Central"/>
</dbReference>
<dbReference type="GO" id="GO:0010286">
    <property type="term" value="P:heat acclimation"/>
    <property type="evidence" value="ECO:0000318"/>
    <property type="project" value="GO_Central"/>
</dbReference>
<dbReference type="GO" id="GO:0001558">
    <property type="term" value="P:regulation of cell growth"/>
    <property type="evidence" value="ECO:0000315"/>
    <property type="project" value="UniProtKB"/>
</dbReference>
<dbReference type="FunFam" id="1.10.510.10:FF:000290">
    <property type="entry name" value="LRR receptor-like serine/threonine-protein kinase ERECTA"/>
    <property type="match status" value="1"/>
</dbReference>
<dbReference type="FunFam" id="3.30.200.20:FF:000288">
    <property type="entry name" value="LRR receptor-like serine/threonine-protein kinase ERECTA"/>
    <property type="match status" value="1"/>
</dbReference>
<dbReference type="FunFam" id="3.80.10.10:FF:000077">
    <property type="entry name" value="LRR receptor-like serine/threonine-protein kinase ERL1"/>
    <property type="match status" value="1"/>
</dbReference>
<dbReference type="FunFam" id="3.80.10.10:FF:000107">
    <property type="entry name" value="LRR receptor-like serine/threonine-protein kinase ERL1"/>
    <property type="match status" value="1"/>
</dbReference>
<dbReference type="FunFam" id="3.80.10.10:FF:000219">
    <property type="entry name" value="LRR receptor-like serine/threonine-protein kinase ERL1"/>
    <property type="match status" value="1"/>
</dbReference>
<dbReference type="Gene3D" id="3.30.200.20">
    <property type="entry name" value="Phosphorylase Kinase, domain 1"/>
    <property type="match status" value="1"/>
</dbReference>
<dbReference type="Gene3D" id="3.80.10.10">
    <property type="entry name" value="Ribonuclease Inhibitor"/>
    <property type="match status" value="5"/>
</dbReference>
<dbReference type="Gene3D" id="1.10.510.10">
    <property type="entry name" value="Transferase(Phosphotransferase) domain 1"/>
    <property type="match status" value="1"/>
</dbReference>
<dbReference type="InterPro" id="IPR011009">
    <property type="entry name" value="Kinase-like_dom_sf"/>
</dbReference>
<dbReference type="InterPro" id="IPR001611">
    <property type="entry name" value="Leu-rich_rpt"/>
</dbReference>
<dbReference type="InterPro" id="IPR003591">
    <property type="entry name" value="Leu-rich_rpt_typical-subtyp"/>
</dbReference>
<dbReference type="InterPro" id="IPR032675">
    <property type="entry name" value="LRR_dom_sf"/>
</dbReference>
<dbReference type="InterPro" id="IPR013210">
    <property type="entry name" value="LRR_N_plant-typ"/>
</dbReference>
<dbReference type="InterPro" id="IPR051716">
    <property type="entry name" value="Plant_RL_S/T_kinase"/>
</dbReference>
<dbReference type="InterPro" id="IPR000719">
    <property type="entry name" value="Prot_kinase_dom"/>
</dbReference>
<dbReference type="InterPro" id="IPR017441">
    <property type="entry name" value="Protein_kinase_ATP_BS"/>
</dbReference>
<dbReference type="InterPro" id="IPR008271">
    <property type="entry name" value="Ser/Thr_kinase_AS"/>
</dbReference>
<dbReference type="PANTHER" id="PTHR48053">
    <property type="entry name" value="LEUCINE RICH REPEAT FAMILY PROTEIN, EXPRESSED"/>
    <property type="match status" value="1"/>
</dbReference>
<dbReference type="PANTHER" id="PTHR48053:SF120">
    <property type="entry name" value="PROTEIN KINASE DOMAIN-CONTAINING PROTEIN"/>
    <property type="match status" value="1"/>
</dbReference>
<dbReference type="Pfam" id="PF00560">
    <property type="entry name" value="LRR_1"/>
    <property type="match status" value="6"/>
</dbReference>
<dbReference type="Pfam" id="PF13855">
    <property type="entry name" value="LRR_8"/>
    <property type="match status" value="3"/>
</dbReference>
<dbReference type="Pfam" id="PF08263">
    <property type="entry name" value="LRRNT_2"/>
    <property type="match status" value="1"/>
</dbReference>
<dbReference type="Pfam" id="PF00069">
    <property type="entry name" value="Pkinase"/>
    <property type="match status" value="1"/>
</dbReference>
<dbReference type="PRINTS" id="PR00019">
    <property type="entry name" value="LEURICHRPT"/>
</dbReference>
<dbReference type="SMART" id="SM00369">
    <property type="entry name" value="LRR_TYP"/>
    <property type="match status" value="7"/>
</dbReference>
<dbReference type="SMART" id="SM00220">
    <property type="entry name" value="S_TKc"/>
    <property type="match status" value="1"/>
</dbReference>
<dbReference type="SUPFAM" id="SSF52058">
    <property type="entry name" value="L domain-like"/>
    <property type="match status" value="2"/>
</dbReference>
<dbReference type="SUPFAM" id="SSF56112">
    <property type="entry name" value="Protein kinase-like (PK-like)"/>
    <property type="match status" value="1"/>
</dbReference>
<dbReference type="PROSITE" id="PS51450">
    <property type="entry name" value="LRR"/>
    <property type="match status" value="14"/>
</dbReference>
<dbReference type="PROSITE" id="PS00107">
    <property type="entry name" value="PROTEIN_KINASE_ATP"/>
    <property type="match status" value="1"/>
</dbReference>
<dbReference type="PROSITE" id="PS50011">
    <property type="entry name" value="PROTEIN_KINASE_DOM"/>
    <property type="match status" value="1"/>
</dbReference>
<dbReference type="PROSITE" id="PS00108">
    <property type="entry name" value="PROTEIN_KINASE_ST"/>
    <property type="match status" value="1"/>
</dbReference>
<accession>I1Z695</accession>
<accession>Q0DX34</accession>
<accession>Q6ZGC7</accession>
<gene>
    <name evidence="6" type="primary">ER2</name>
    <name evidence="5" type="synonym">RLCK85</name>
    <name evidence="10" type="ordered locus">Os02g0777400</name>
    <name evidence="7" type="ordered locus">LOC_Os02g53720</name>
    <name evidence="9" type="ORF">OJ1534_E09.14</name>
</gene>
<keyword id="KW-0067">ATP-binding</keyword>
<keyword id="KW-1003">Cell membrane</keyword>
<keyword id="KW-0325">Glycoprotein</keyword>
<keyword id="KW-0341">Growth regulation</keyword>
<keyword id="KW-0418">Kinase</keyword>
<keyword id="KW-0433">Leucine-rich repeat</keyword>
<keyword id="KW-0472">Membrane</keyword>
<keyword id="KW-0547">Nucleotide-binding</keyword>
<keyword id="KW-0675">Receptor</keyword>
<keyword id="KW-1185">Reference proteome</keyword>
<keyword id="KW-0677">Repeat</keyword>
<keyword id="KW-0723">Serine/threonine-protein kinase</keyword>
<keyword id="KW-0732">Signal</keyword>
<keyword id="KW-0808">Transferase</keyword>
<keyword id="KW-0812">Transmembrane</keyword>
<keyword id="KW-1133">Transmembrane helix</keyword>
<comment type="function">
    <text evidence="4">Receptor kinase that may be involved in the regulation of cell proliferation and cell growth.</text>
</comment>
<comment type="catalytic activity">
    <reaction evidence="8">
        <text>L-seryl-[protein] + ATP = O-phospho-L-seryl-[protein] + ADP + H(+)</text>
        <dbReference type="Rhea" id="RHEA:17989"/>
        <dbReference type="Rhea" id="RHEA-COMP:9863"/>
        <dbReference type="Rhea" id="RHEA-COMP:11604"/>
        <dbReference type="ChEBI" id="CHEBI:15378"/>
        <dbReference type="ChEBI" id="CHEBI:29999"/>
        <dbReference type="ChEBI" id="CHEBI:30616"/>
        <dbReference type="ChEBI" id="CHEBI:83421"/>
        <dbReference type="ChEBI" id="CHEBI:456216"/>
        <dbReference type="EC" id="2.7.11.1"/>
    </reaction>
    <physiologicalReaction direction="left-to-right" evidence="8">
        <dbReference type="Rhea" id="RHEA:17990"/>
    </physiologicalReaction>
</comment>
<comment type="catalytic activity">
    <reaction evidence="8">
        <text>L-threonyl-[protein] + ATP = O-phospho-L-threonyl-[protein] + ADP + H(+)</text>
        <dbReference type="Rhea" id="RHEA:46608"/>
        <dbReference type="Rhea" id="RHEA-COMP:11060"/>
        <dbReference type="Rhea" id="RHEA-COMP:11605"/>
        <dbReference type="ChEBI" id="CHEBI:15378"/>
        <dbReference type="ChEBI" id="CHEBI:30013"/>
        <dbReference type="ChEBI" id="CHEBI:30616"/>
        <dbReference type="ChEBI" id="CHEBI:61977"/>
        <dbReference type="ChEBI" id="CHEBI:456216"/>
        <dbReference type="EC" id="2.7.11.1"/>
    </reaction>
    <physiologicalReaction direction="left-to-right" evidence="8">
        <dbReference type="Rhea" id="RHEA:46609"/>
    </physiologicalReaction>
</comment>
<comment type="subcellular location">
    <subcellularLocation>
        <location evidence="1">Cell membrane</location>
        <topology evidence="1">Single-pass type I membrane protein</topology>
    </subcellularLocation>
</comment>
<comment type="disruption phenotype">
    <text evidence="4">Reduced plant height, reduced panicle length and reduced seed set.</text>
</comment>
<comment type="similarity">
    <text evidence="7">Belongs to the protein kinase superfamily. Ser/Thr protein kinase family.</text>
</comment>
<comment type="sequence caution" evidence="7">
    <conflict type="erroneous gene model prediction">
        <sequence resource="EMBL-CDS" id="BAD16970"/>
    </conflict>
</comment>
<comment type="sequence caution" evidence="7">
    <conflict type="erroneous gene model prediction">
        <sequence resource="EMBL-CDS" id="BAF10204"/>
    </conflict>
</comment>
<comment type="sequence caution" evidence="7">
    <conflict type="erroneous initiation">
        <sequence resource="EMBL-CDS" id="BAG87384"/>
    </conflict>
    <text>Truncated N-terminus.</text>
</comment>
<comment type="sequence caution" evidence="7">
    <conflict type="erroneous gene model prediction">
        <sequence resource="EMBL-CDS" id="BAS81182"/>
    </conflict>
</comment>
<name>EREC2_ORYSJ</name>
<feature type="signal peptide" evidence="1">
    <location>
        <begin position="1"/>
        <end position="21"/>
    </location>
</feature>
<feature type="chain" id="PRO_5003655149" description="LRR receptor-like serine/threonine-protein kinase ER2">
    <location>
        <begin position="22"/>
        <end position="986"/>
    </location>
</feature>
<feature type="topological domain" description="Extracellular" evidence="7">
    <location>
        <begin position="22"/>
        <end position="581"/>
    </location>
</feature>
<feature type="transmembrane region" description="Helical" evidence="1">
    <location>
        <begin position="582"/>
        <end position="602"/>
    </location>
</feature>
<feature type="topological domain" description="Cytoplasmic" evidence="7">
    <location>
        <begin position="603"/>
        <end position="986"/>
    </location>
</feature>
<feature type="repeat" description="LRR 1" evidence="1">
    <location>
        <begin position="68"/>
        <end position="89"/>
    </location>
</feature>
<feature type="repeat" description="LRR 2" evidence="1">
    <location>
        <begin position="90"/>
        <end position="114"/>
    </location>
</feature>
<feature type="repeat" description="LRR 3" evidence="1">
    <location>
        <begin position="116"/>
        <end position="138"/>
    </location>
</feature>
<feature type="repeat" description="LRR 4" evidence="1">
    <location>
        <begin position="139"/>
        <end position="161"/>
    </location>
</feature>
<feature type="repeat" description="LRR 5" evidence="1">
    <location>
        <begin position="162"/>
        <end position="186"/>
    </location>
</feature>
<feature type="repeat" description="LRR 6" evidence="1">
    <location>
        <begin position="188"/>
        <end position="210"/>
    </location>
</feature>
<feature type="repeat" description="LRR 7" evidence="1">
    <location>
        <begin position="211"/>
        <end position="233"/>
    </location>
</feature>
<feature type="repeat" description="LRR 8" evidence="1">
    <location>
        <begin position="234"/>
        <end position="259"/>
    </location>
</feature>
<feature type="repeat" description="LRR 9" evidence="1">
    <location>
        <begin position="261"/>
        <end position="280"/>
    </location>
</feature>
<feature type="repeat" description="LRR 10" evidence="1">
    <location>
        <begin position="281"/>
        <end position="304"/>
    </location>
</feature>
<feature type="repeat" description="LRR 11" evidence="1">
    <location>
        <begin position="306"/>
        <end position="329"/>
    </location>
</feature>
<feature type="repeat" description="LRR 12" evidence="1">
    <location>
        <begin position="330"/>
        <end position="352"/>
    </location>
</feature>
<feature type="repeat" description="LRR 13" evidence="1">
    <location>
        <begin position="354"/>
        <end position="377"/>
    </location>
</feature>
<feature type="repeat" description="LRR 14" evidence="1">
    <location>
        <begin position="379"/>
        <end position="401"/>
    </location>
</feature>
<feature type="repeat" description="LRR 15" evidence="1">
    <location>
        <begin position="402"/>
        <end position="425"/>
    </location>
</feature>
<feature type="repeat" description="LRR 16" evidence="1">
    <location>
        <begin position="427"/>
        <end position="449"/>
    </location>
</feature>
<feature type="repeat" description="LRR 17" evidence="1">
    <location>
        <begin position="450"/>
        <end position="472"/>
    </location>
</feature>
<feature type="repeat" description="LRR 18" evidence="1">
    <location>
        <begin position="473"/>
        <end position="498"/>
    </location>
</feature>
<feature type="repeat" description="LRR 19" evidence="1">
    <location>
        <begin position="500"/>
        <end position="520"/>
    </location>
</feature>
<feature type="repeat" description="LRR 20" evidence="1">
    <location>
        <begin position="521"/>
        <end position="545"/>
    </location>
</feature>
<feature type="domain" description="Protein kinase" evidence="2">
    <location>
        <begin position="653"/>
        <end position="934"/>
    </location>
</feature>
<feature type="active site" description="Proton acceptor" evidence="2">
    <location>
        <position position="779"/>
    </location>
</feature>
<feature type="binding site" evidence="2">
    <location>
        <begin position="659"/>
        <end position="667"/>
    </location>
    <ligand>
        <name>ATP</name>
        <dbReference type="ChEBI" id="CHEBI:30616"/>
    </ligand>
</feature>
<feature type="binding site" evidence="2">
    <location>
        <position position="681"/>
    </location>
    <ligand>
        <name>ATP</name>
        <dbReference type="ChEBI" id="CHEBI:30616"/>
    </ligand>
</feature>
<feature type="glycosylation site" description="N-linked (GlcNAc...) asparagine" evidence="3">
    <location>
        <position position="64"/>
    </location>
</feature>
<feature type="glycosylation site" description="N-linked (GlcNAc...) asparagine" evidence="3">
    <location>
        <position position="73"/>
    </location>
</feature>
<feature type="glycosylation site" description="N-linked (GlcNAc...) asparagine" evidence="3">
    <location>
        <position position="220"/>
    </location>
</feature>
<feature type="glycosylation site" description="N-linked (GlcNAc...) asparagine" evidence="3">
    <location>
        <position position="233"/>
    </location>
</feature>
<feature type="glycosylation site" description="N-linked (GlcNAc...) asparagine" evidence="3">
    <location>
        <position position="269"/>
    </location>
</feature>
<feature type="glycosylation site" description="N-linked (GlcNAc...) asparagine" evidence="3">
    <location>
        <position position="304"/>
    </location>
</feature>
<feature type="glycosylation site" description="N-linked (GlcNAc...) asparagine" evidence="3">
    <location>
        <position position="328"/>
    </location>
</feature>
<feature type="glycosylation site" description="N-linked (GlcNAc...) asparagine" evidence="3">
    <location>
        <position position="373"/>
    </location>
</feature>
<feature type="glycosylation site" description="N-linked (GlcNAc...) asparagine" evidence="3">
    <location>
        <position position="391"/>
    </location>
</feature>
<feature type="glycosylation site" description="N-linked (GlcNAc...) asparagine" evidence="3">
    <location>
        <position position="408"/>
    </location>
</feature>
<feature type="glycosylation site" description="N-linked (GlcNAc...) asparagine" evidence="3">
    <location>
        <position position="456"/>
    </location>
</feature>
<feature type="glycosylation site" description="N-linked (GlcNAc...) asparagine" evidence="3">
    <location>
        <position position="509"/>
    </location>
</feature>
<feature type="glycosylation site" description="N-linked (GlcNAc...) asparagine" evidence="3">
    <location>
        <position position="527"/>
    </location>
</feature>
<feature type="glycosylation site" description="N-linked (GlcNAc...) asparagine" evidence="3">
    <location>
        <position position="542"/>
    </location>
</feature>
<reference key="1">
    <citation type="submission" date="2011-11" db="EMBL/GenBank/DDBJ databases">
        <title>Cloning of ERECTA-like genes from japonica rice.</title>
        <authorList>
            <person name="Liu J."/>
            <person name="Xie X."/>
        </authorList>
    </citation>
    <scope>NUCLEOTIDE SEQUENCE [MRNA]</scope>
</reference>
<reference key="2">
    <citation type="journal article" date="2005" name="Nature">
        <title>The map-based sequence of the rice genome.</title>
        <authorList>
            <consortium name="International rice genome sequencing project (IRGSP)"/>
        </authorList>
    </citation>
    <scope>NUCLEOTIDE SEQUENCE [LARGE SCALE GENOMIC DNA]</scope>
    <source>
        <strain>cv. Nipponbare</strain>
    </source>
</reference>
<reference key="3">
    <citation type="journal article" date="2008" name="Nucleic Acids Res.">
        <title>The rice annotation project database (RAP-DB): 2008 update.</title>
        <authorList>
            <consortium name="The rice annotation project (RAP)"/>
        </authorList>
    </citation>
    <scope>GENOME REANNOTATION</scope>
    <source>
        <strain>cv. Nipponbare</strain>
    </source>
</reference>
<reference key="4">
    <citation type="journal article" date="2013" name="Rice">
        <title>Improvement of the Oryza sativa Nipponbare reference genome using next generation sequence and optical map data.</title>
        <authorList>
            <person name="Kawahara Y."/>
            <person name="de la Bastide M."/>
            <person name="Hamilton J.P."/>
            <person name="Kanamori H."/>
            <person name="McCombie W.R."/>
            <person name="Ouyang S."/>
            <person name="Schwartz D.C."/>
            <person name="Tanaka T."/>
            <person name="Wu J."/>
            <person name="Zhou S."/>
            <person name="Childs K.L."/>
            <person name="Davidson R.M."/>
            <person name="Lin H."/>
            <person name="Quesada-Ocampo L."/>
            <person name="Vaillancourt B."/>
            <person name="Sakai H."/>
            <person name="Lee S.S."/>
            <person name="Kim J."/>
            <person name="Numa H."/>
            <person name="Itoh T."/>
            <person name="Buell C.R."/>
            <person name="Matsumoto T."/>
        </authorList>
    </citation>
    <scope>GENOME REANNOTATION</scope>
    <source>
        <strain>cv. Nipponbare</strain>
    </source>
</reference>
<reference key="5">
    <citation type="journal article" date="2003" name="Science">
        <title>Collection, mapping, and annotation of over 28,000 cDNA clones from japonica rice.</title>
        <authorList>
            <consortium name="The rice full-length cDNA consortium"/>
        </authorList>
    </citation>
    <scope>NUCLEOTIDE SEQUENCE [LARGE SCALE MRNA] OF 540-986</scope>
    <source>
        <strain>cv. Nipponbare</strain>
    </source>
</reference>
<reference key="6">
    <citation type="journal article" date="2008" name="Mol. Plant">
        <title>The receptor-like cytoplasmic kinase (OsRLCK) gene family in rice: organization, phylogenetic relationship, and expression during development and stress.</title>
        <authorList>
            <person name="Vij S."/>
            <person name="Giri J."/>
            <person name="Dansana P.K."/>
            <person name="Kapoor S."/>
            <person name="Tyagi A.K."/>
        </authorList>
    </citation>
    <scope>GENE FAMILY</scope>
    <scope>NOMENCLATURE</scope>
</reference>
<reference key="7">
    <citation type="journal article" date="2018" name="Front. Plant Sci.">
        <title>Phylogenetic and CRISPR/Cas9 studies in deciphering the evolutionary trajectory and phenotypic impacts of rice ERECTA genes.</title>
        <authorList>
            <person name="Zhang Y."/>
            <person name="Li S."/>
            <person name="Xue S."/>
            <person name="Yang S."/>
            <person name="Huang J."/>
            <person name="Wang L."/>
        </authorList>
    </citation>
    <scope>FUNCTION</scope>
    <scope>CATALYTIC ACTIVITY</scope>
    <scope>DISRUPTION PHENOTYPE</scope>
</reference>
<organism>
    <name type="scientific">Oryza sativa subsp. japonica</name>
    <name type="common">Rice</name>
    <dbReference type="NCBI Taxonomy" id="39947"/>
    <lineage>
        <taxon>Eukaryota</taxon>
        <taxon>Viridiplantae</taxon>
        <taxon>Streptophyta</taxon>
        <taxon>Embryophyta</taxon>
        <taxon>Tracheophyta</taxon>
        <taxon>Spermatophyta</taxon>
        <taxon>Magnoliopsida</taxon>
        <taxon>Liliopsida</taxon>
        <taxon>Poales</taxon>
        <taxon>Poaceae</taxon>
        <taxon>BOP clade</taxon>
        <taxon>Oryzoideae</taxon>
        <taxon>Oryzeae</taxon>
        <taxon>Oryzinae</taxon>
        <taxon>Oryza</taxon>
        <taxon>Oryza sativa</taxon>
    </lineage>
</organism>